<name>KLF1_CAEEL</name>
<proteinExistence type="evidence at protein level"/>
<organism evidence="7">
    <name type="scientific">Caenorhabditis elegans</name>
    <dbReference type="NCBI Taxonomy" id="6239"/>
    <lineage>
        <taxon>Eukaryota</taxon>
        <taxon>Metazoa</taxon>
        <taxon>Ecdysozoa</taxon>
        <taxon>Nematoda</taxon>
        <taxon>Chromadorea</taxon>
        <taxon>Rhabditida</taxon>
        <taxon>Rhabditina</taxon>
        <taxon>Rhabditomorpha</taxon>
        <taxon>Rhabditoidea</taxon>
        <taxon>Rhabditidae</taxon>
        <taxon>Peloderinae</taxon>
        <taxon>Caenorhabditis</taxon>
    </lineage>
</organism>
<evidence type="ECO:0000255" key="1">
    <source>
        <dbReference type="PROSITE-ProRule" id="PRU00042"/>
    </source>
</evidence>
<evidence type="ECO:0000256" key="2">
    <source>
        <dbReference type="SAM" id="MobiDB-lite"/>
    </source>
</evidence>
<evidence type="ECO:0000269" key="3">
    <source>
    </source>
</evidence>
<evidence type="ECO:0000269" key="4">
    <source>
    </source>
</evidence>
<evidence type="ECO:0000269" key="5">
    <source>
    </source>
</evidence>
<evidence type="ECO:0000305" key="6"/>
<evidence type="ECO:0000312" key="7">
    <source>
        <dbReference type="Proteomes" id="UP000001940"/>
    </source>
</evidence>
<evidence type="ECO:0000312" key="8">
    <source>
        <dbReference type="WormBase" id="F56F11.3"/>
    </source>
</evidence>
<keyword id="KW-0963">Cytoplasm</keyword>
<keyword id="KW-0238">DNA-binding</keyword>
<keyword id="KW-0479">Metal-binding</keyword>
<keyword id="KW-0539">Nucleus</keyword>
<keyword id="KW-1185">Reference proteome</keyword>
<keyword id="KW-0677">Repeat</keyword>
<keyword id="KW-0804">Transcription</keyword>
<keyword id="KW-0805">Transcription regulation</keyword>
<keyword id="KW-0832">Ubl conjugation</keyword>
<keyword id="KW-0862">Zinc</keyword>
<keyword id="KW-0863">Zinc-finger</keyword>
<gene>
    <name evidence="8" type="primary">klf-1</name>
    <name evidence="8" type="ORF">F56F11.3</name>
</gene>
<dbReference type="EMBL" id="BX284603">
    <property type="protein sequence ID" value="CCD72011.1"/>
    <property type="molecule type" value="Genomic_DNA"/>
</dbReference>
<dbReference type="PIR" id="T33634">
    <property type="entry name" value="T33634"/>
</dbReference>
<dbReference type="RefSeq" id="NP_497632.1">
    <property type="nucleotide sequence ID" value="NM_065231.5"/>
</dbReference>
<dbReference type="SMR" id="Q9TZ64"/>
<dbReference type="FunCoup" id="Q9TZ64">
    <property type="interactions" value="7"/>
</dbReference>
<dbReference type="IntAct" id="Q9TZ64">
    <property type="interactions" value="21"/>
</dbReference>
<dbReference type="STRING" id="6239.F56F11.3.1"/>
<dbReference type="PaxDb" id="6239-F56F11.3.1"/>
<dbReference type="PeptideAtlas" id="Q9TZ64"/>
<dbReference type="EnsemblMetazoa" id="F56F11.3.1">
    <property type="protein sequence ID" value="F56F11.3.1"/>
    <property type="gene ID" value="WBGene00018990"/>
</dbReference>
<dbReference type="GeneID" id="175404"/>
<dbReference type="KEGG" id="cel:CELE_F56F11.3"/>
<dbReference type="UCSC" id="F56F11.3.1">
    <property type="organism name" value="c. elegans"/>
</dbReference>
<dbReference type="AGR" id="WB:WBGene00018990"/>
<dbReference type="CTD" id="175404"/>
<dbReference type="WormBase" id="F56F11.3">
    <property type="protein sequence ID" value="CE11280"/>
    <property type="gene ID" value="WBGene00018990"/>
    <property type="gene designation" value="klf-1"/>
</dbReference>
<dbReference type="eggNOG" id="KOG1721">
    <property type="taxonomic scope" value="Eukaryota"/>
</dbReference>
<dbReference type="GeneTree" id="ENSGT00940000164016"/>
<dbReference type="HOGENOM" id="CLU_035852_0_0_1"/>
<dbReference type="InParanoid" id="Q9TZ64"/>
<dbReference type="OMA" id="HCTHPNC"/>
<dbReference type="OrthoDB" id="4748970at2759"/>
<dbReference type="SignaLink" id="Q9TZ64"/>
<dbReference type="PRO" id="PR:Q9TZ64"/>
<dbReference type="Proteomes" id="UP000001940">
    <property type="component" value="Chromosome III"/>
</dbReference>
<dbReference type="Bgee" id="WBGene00018990">
    <property type="expression patterns" value="Expressed in larva and 3 other cell types or tissues"/>
</dbReference>
<dbReference type="GO" id="GO:0000785">
    <property type="term" value="C:chromatin"/>
    <property type="evidence" value="ECO:0000314"/>
    <property type="project" value="UniProtKB"/>
</dbReference>
<dbReference type="GO" id="GO:0005737">
    <property type="term" value="C:cytoplasm"/>
    <property type="evidence" value="ECO:0007669"/>
    <property type="project" value="UniProtKB-SubCell"/>
</dbReference>
<dbReference type="GO" id="GO:0005634">
    <property type="term" value="C:nucleus"/>
    <property type="evidence" value="ECO:0007669"/>
    <property type="project" value="UniProtKB-SubCell"/>
</dbReference>
<dbReference type="GO" id="GO:0000981">
    <property type="term" value="F:DNA-binding transcription factor activity, RNA polymerase II-specific"/>
    <property type="evidence" value="ECO:0000318"/>
    <property type="project" value="GO_Central"/>
</dbReference>
<dbReference type="GO" id="GO:0000978">
    <property type="term" value="F:RNA polymerase II cis-regulatory region sequence-specific DNA binding"/>
    <property type="evidence" value="ECO:0000315"/>
    <property type="project" value="UniProtKB"/>
</dbReference>
<dbReference type="GO" id="GO:0008270">
    <property type="term" value="F:zinc ion binding"/>
    <property type="evidence" value="ECO:0007669"/>
    <property type="project" value="UniProtKB-KW"/>
</dbReference>
<dbReference type="GO" id="GO:0043277">
    <property type="term" value="P:apoptotic cell clearance"/>
    <property type="evidence" value="ECO:0000315"/>
    <property type="project" value="WormBase"/>
</dbReference>
<dbReference type="GO" id="GO:0006915">
    <property type="term" value="P:apoptotic process"/>
    <property type="evidence" value="ECO:0000315"/>
    <property type="project" value="WormBase"/>
</dbReference>
<dbReference type="GO" id="GO:0008340">
    <property type="term" value="P:determination of adult lifespan"/>
    <property type="evidence" value="ECO:0000315"/>
    <property type="project" value="UniProtKB"/>
</dbReference>
<dbReference type="GO" id="GO:0006629">
    <property type="term" value="P:lipid metabolic process"/>
    <property type="evidence" value="ECO:0000315"/>
    <property type="project" value="WormBase"/>
</dbReference>
<dbReference type="GO" id="GO:0006357">
    <property type="term" value="P:regulation of transcription by RNA polymerase II"/>
    <property type="evidence" value="ECO:0000315"/>
    <property type="project" value="UniProtKB"/>
</dbReference>
<dbReference type="GO" id="GO:0006805">
    <property type="term" value="P:xenobiotic metabolic process"/>
    <property type="evidence" value="ECO:0000315"/>
    <property type="project" value="UniProtKB"/>
</dbReference>
<dbReference type="FunFam" id="3.30.160.60:FF:000018">
    <property type="entry name" value="Krueppel-like factor 15"/>
    <property type="match status" value="1"/>
</dbReference>
<dbReference type="FunFam" id="3.30.160.60:FF:002639">
    <property type="entry name" value="Kruppel-Like Factor (Zinc finger protein)"/>
    <property type="match status" value="1"/>
</dbReference>
<dbReference type="FunFam" id="3.30.160.60:FF:000624">
    <property type="entry name" value="zinc finger protein 697"/>
    <property type="match status" value="1"/>
</dbReference>
<dbReference type="Gene3D" id="3.30.160.60">
    <property type="entry name" value="Classic Zinc Finger"/>
    <property type="match status" value="3"/>
</dbReference>
<dbReference type="InterPro" id="IPR036236">
    <property type="entry name" value="Znf_C2H2_sf"/>
</dbReference>
<dbReference type="InterPro" id="IPR013087">
    <property type="entry name" value="Znf_C2H2_type"/>
</dbReference>
<dbReference type="PANTHER" id="PTHR23235">
    <property type="entry name" value="KRUEPPEL-LIKE TRANSCRIPTION FACTOR"/>
    <property type="match status" value="1"/>
</dbReference>
<dbReference type="PANTHER" id="PTHR23235:SF156">
    <property type="entry name" value="KRUPPEL-LIKE FACTOR 18"/>
    <property type="match status" value="1"/>
</dbReference>
<dbReference type="Pfam" id="PF00096">
    <property type="entry name" value="zf-C2H2"/>
    <property type="match status" value="2"/>
</dbReference>
<dbReference type="SMART" id="SM00355">
    <property type="entry name" value="ZnF_C2H2"/>
    <property type="match status" value="3"/>
</dbReference>
<dbReference type="SUPFAM" id="SSF57667">
    <property type="entry name" value="beta-beta-alpha zinc fingers"/>
    <property type="match status" value="2"/>
</dbReference>
<dbReference type="PROSITE" id="PS00028">
    <property type="entry name" value="ZINC_FINGER_C2H2_1"/>
    <property type="match status" value="3"/>
</dbReference>
<dbReference type="PROSITE" id="PS50157">
    <property type="entry name" value="ZINC_FINGER_C2H2_2"/>
    <property type="match status" value="3"/>
</dbReference>
<protein>
    <recommendedName>
        <fullName evidence="6">Kruppel-like factor 1</fullName>
    </recommendedName>
</protein>
<accession>Q9TZ64</accession>
<comment type="function">
    <text evidence="3 4 5">Transcription factor which modulates genes involved in lipid metabolism and the phase I detoxification pathway, including cytochrome P450 oxidases (PubMed:18680432, PubMed:24805825, PubMed:31346165). Required for diet restriction- and mitochondrial dysfunction-mediated lifespan extension, perhaps acting in a ubiquitination-dependent manner (PubMed:24805825, PubMed:31346165). Involved in the response to oxidative stress (PubMed:31346165). Plays a role in cell death (PubMed:18680432).</text>
</comment>
<comment type="subunit">
    <text evidence="4">Interacts with E3 ubiquitin-protein ligase wwp-1 (via WW domains).</text>
</comment>
<comment type="subcellular location">
    <subcellularLocation>
        <location evidence="5">Nucleus</location>
    </subcellularLocation>
    <subcellularLocation>
        <location evidence="5">Cytoplasm</location>
    </subcellularLocation>
    <text evidence="5">Localized to nucleus at the larval L4 stage, becoming cytoplasmic during early adulthood. Translocation to the nucleus dependent, in some circumstances, on oxidative stress.</text>
</comment>
<comment type="tissue specificity">
    <text evidence="5">Expressed in intestine, hypodermis and a few neurons.</text>
</comment>
<comment type="developmental stage">
    <text evidence="3">Expressed in all developmental stages, increasing gradually from embryo to larval L4 stage, decreasing and stabilizing in adult stage (PubMed:18680432). Expressed in intestine in all larval and adult stages, and in a few neuronal and hypodermal cells (PubMed:18680432).</text>
</comment>
<comment type="induction">
    <text evidence="5">Induced by treatment with high levels of paraquat, a chemical causing production of reactive oxygen species (ROS), but not by other exogenous stressors, such as heat shock or osmotic stress.</text>
</comment>
<comment type="PTM">
    <text evidence="4">Ubiquitinated; probably preferentially monoubiquitinated by wwp-1.</text>
</comment>
<comment type="disruption phenotype">
    <text evidence="3 4 5">RNAi-mediated knockown leads to increased cell death, perhaps by apoptosis, in the germline and uterus of hermaphrodites (PubMed:18680432). Lipid contents in the intestine increase (PubMed:18680432). RNAi-mediated knockdown causes reduced ability of dietary restriction to extend lifespan (PubMed:24805825). Abolishes lifespan extension completely on an eat-2 mutant background, independent of whether knockdown is ubiquitous, or targeted only to the intestine (PubMed:24805825). Abolishes lifespan extension on either isp-1;ctb-1 double mutant, or isp-1, gas-1 or mev-1 single mutant backgrounds; knockdown is most effective when applied in early adulthood, rather than during early development (PubMed:31346165). Further decreases the lower movement rates of isp-1;ctb-1 double mutants (PubMed:31346165).</text>
</comment>
<comment type="similarity">
    <text evidence="6">Belongs to the krueppel C2H2-type zinc-finger protein family.</text>
</comment>
<reference evidence="7" key="1">
    <citation type="journal article" date="1998" name="Science">
        <title>Genome sequence of the nematode C. elegans: a platform for investigating biology.</title>
        <authorList>
            <consortium name="The C. elegans sequencing consortium"/>
        </authorList>
    </citation>
    <scope>NUCLEOTIDE SEQUENCE [LARGE SCALE GENOMIC DNA]</scope>
    <source>
        <strain evidence="7">Bristol N2</strain>
    </source>
</reference>
<reference evidence="6" key="2">
    <citation type="journal article" date="2008" name="DNA Cell Biol.">
        <title>A Krueppel-like factor in Caenorhabditis elegans with essential roles in fat regulation, cell death, and phagocytosis.</title>
        <authorList>
            <person name="Hashmi S."/>
            <person name="Ji Q."/>
            <person name="Zhang J."/>
            <person name="Parhar R.S."/>
            <person name="Huang C.H."/>
            <person name="Brey C."/>
            <person name="Gaugler R."/>
        </authorList>
    </citation>
    <scope>FUNCTION</scope>
    <scope>DEVELOPMENTAL STAGE</scope>
    <scope>DISRUPTION PHENOTYPE</scope>
    <scope>UBIQUITINATION</scope>
</reference>
<reference evidence="6" key="3">
    <citation type="journal article" date="2014" name="Nat. Commun.">
        <title>A Krueppel-like factor downstream of the E3 ligase WWP-1 mediates dietary-restriction-induced longevity in Caenorhabditis elegans.</title>
        <authorList>
            <person name="Carrano A.C."/>
            <person name="Dillin A."/>
            <person name="Hunter T."/>
        </authorList>
    </citation>
    <scope>FUNCTION</scope>
    <scope>INTERACTION WITH WWP-1</scope>
    <scope>DISRUPTION PHENOTYPE</scope>
</reference>
<reference evidence="6" key="4">
    <citation type="journal article" date="2019" name="Nat. Commun.">
        <title>KLF-1 orchestrates a xenobiotic detoxification program essential for longevity of mitochondrial mutants.</title>
        <authorList>
            <person name="Herholz M."/>
            <person name="Cepeda E."/>
            <person name="Baumann L."/>
            <person name="Kukat A."/>
            <person name="Hermeling J."/>
            <person name="Maciej S."/>
            <person name="Szczepanowska K."/>
            <person name="Pavlenko V."/>
            <person name="Frommolt P."/>
            <person name="Trifunovic A."/>
        </authorList>
    </citation>
    <scope>FUNCTION</scope>
    <scope>SUBCELLULAR LOCATION</scope>
    <scope>TISSUE SPECIFICITY</scope>
    <scope>DEVELOPMENTAL STAGE</scope>
    <scope>INDUCTION</scope>
    <scope>DISRUPTION PHENOTYPE</scope>
</reference>
<feature type="chain" id="PRO_0000452643" description="Kruppel-like factor 1">
    <location>
        <begin position="1"/>
        <end position="497"/>
    </location>
</feature>
<feature type="zinc finger region" description="C2H2-type 1" evidence="1">
    <location>
        <begin position="414"/>
        <end position="438"/>
    </location>
</feature>
<feature type="zinc finger region" description="C2H2-type 2" evidence="1">
    <location>
        <begin position="444"/>
        <end position="468"/>
    </location>
</feature>
<feature type="zinc finger region" description="C2H2-type 3" evidence="1">
    <location>
        <begin position="474"/>
        <end position="496"/>
    </location>
</feature>
<feature type="region of interest" description="Disordered" evidence="2">
    <location>
        <begin position="371"/>
        <end position="407"/>
    </location>
</feature>
<feature type="compositionally biased region" description="Basic and acidic residues" evidence="2">
    <location>
        <begin position="371"/>
        <end position="388"/>
    </location>
</feature>
<feature type="compositionally biased region" description="Low complexity" evidence="2">
    <location>
        <begin position="397"/>
        <end position="407"/>
    </location>
</feature>
<sequence length="497" mass="55494">MTSSSINATSSREPLIHIPNKPSLSIDPLARADRSVHLSPSFFQPGLSSISSENDDAEQRIHEATRSFNQFGHQFYESIRELSESTSAYERLKANALRRKLENTFGNDSGAATSSSSSSVFERQSDFSAFAPYKNSHFDSTQSLFQPTTSFNDRLEQIKSDFIAEHQKSMSSFSGFNTPTTALGAAFQGMQVKKSAFAPVLLRENLDTRRPGGHLISDILNRDPLPQSRNLNLNMARNVPIRLIHSTSNFDIASSSSGDSGHQDHESIVVEDADMDSPTSPCVKRSAMNFDLRDEPLTVNVESVSSTSDLPSSVSSSVNSFVYQNFDPLEFKRKIDELTASACLAVMPDANGQVDPMAIKTQLDAIKKQMEEHQTHMAEASQRLHVDSSLEDSNCEPSPSSSYDASEPSVKRLHHCTHPNCGKVYTKSSHLKAHFRTHTGEKPYECSWDGCDWRFARSDELTRHYRKHTGDRPFKCSQCSRAFSRSDHLSLHMKRHF</sequence>